<accession>A6TDS8</accession>
<organism>
    <name type="scientific">Klebsiella pneumoniae subsp. pneumoniae (strain ATCC 700721 / MGH 78578)</name>
    <dbReference type="NCBI Taxonomy" id="272620"/>
    <lineage>
        <taxon>Bacteria</taxon>
        <taxon>Pseudomonadati</taxon>
        <taxon>Pseudomonadota</taxon>
        <taxon>Gammaproteobacteria</taxon>
        <taxon>Enterobacterales</taxon>
        <taxon>Enterobacteriaceae</taxon>
        <taxon>Klebsiella/Raoultella group</taxon>
        <taxon>Klebsiella</taxon>
        <taxon>Klebsiella pneumoniae complex</taxon>
    </lineage>
</organism>
<keyword id="KW-0029">Amino-acid transport</keyword>
<keyword id="KW-0997">Cell inner membrane</keyword>
<keyword id="KW-1003">Cell membrane</keyword>
<keyword id="KW-0472">Membrane</keyword>
<keyword id="KW-0812">Transmembrane</keyword>
<keyword id="KW-1133">Transmembrane helix</keyword>
<keyword id="KW-0813">Transport</keyword>
<proteinExistence type="inferred from homology"/>
<feature type="chain" id="PRO_1000070581" description="Arginine exporter protein ArgO">
    <location>
        <begin position="1"/>
        <end position="211"/>
    </location>
</feature>
<feature type="transmembrane region" description="Helical" evidence="1">
    <location>
        <begin position="1"/>
        <end position="21"/>
    </location>
</feature>
<feature type="transmembrane region" description="Helical" evidence="1">
    <location>
        <begin position="37"/>
        <end position="57"/>
    </location>
</feature>
<feature type="transmembrane region" description="Helical" evidence="1">
    <location>
        <begin position="68"/>
        <end position="88"/>
    </location>
</feature>
<feature type="transmembrane region" description="Helical" evidence="1">
    <location>
        <begin position="111"/>
        <end position="131"/>
    </location>
</feature>
<feature type="transmembrane region" description="Helical" evidence="1">
    <location>
        <begin position="147"/>
        <end position="167"/>
    </location>
</feature>
<feature type="transmembrane region" description="Helical" evidence="1">
    <location>
        <begin position="179"/>
        <end position="199"/>
    </location>
</feature>
<gene>
    <name evidence="1" type="primary">argO</name>
    <name type="ordered locus">KPN78578_32880</name>
    <name type="ORF">KPN_03352</name>
</gene>
<dbReference type="EMBL" id="CP000647">
    <property type="protein sequence ID" value="ABR78749.1"/>
    <property type="molecule type" value="Genomic_DNA"/>
</dbReference>
<dbReference type="RefSeq" id="WP_015958961.1">
    <property type="nucleotide sequence ID" value="NC_009648.1"/>
</dbReference>
<dbReference type="STRING" id="272620.KPN_03352"/>
<dbReference type="PaxDb" id="272620-KPN_03352"/>
<dbReference type="EnsemblBacteria" id="ABR78749">
    <property type="protein sequence ID" value="ABR78749"/>
    <property type="gene ID" value="KPN_03352"/>
</dbReference>
<dbReference type="KEGG" id="kpn:KPN_03352"/>
<dbReference type="HOGENOM" id="CLU_087840_0_1_6"/>
<dbReference type="Proteomes" id="UP000000265">
    <property type="component" value="Chromosome"/>
</dbReference>
<dbReference type="GO" id="GO:0005886">
    <property type="term" value="C:plasma membrane"/>
    <property type="evidence" value="ECO:0007669"/>
    <property type="project" value="UniProtKB-SubCell"/>
</dbReference>
<dbReference type="GO" id="GO:0061459">
    <property type="term" value="F:L-arginine transmembrane transporter activity"/>
    <property type="evidence" value="ECO:0007669"/>
    <property type="project" value="UniProtKB-UniRule"/>
</dbReference>
<dbReference type="HAMAP" id="MF_01901">
    <property type="entry name" value="ArgO"/>
    <property type="match status" value="1"/>
</dbReference>
<dbReference type="InterPro" id="IPR023445">
    <property type="entry name" value="Arg_export_ArgO_enterobac"/>
</dbReference>
<dbReference type="InterPro" id="IPR001123">
    <property type="entry name" value="LeuE-type"/>
</dbReference>
<dbReference type="InterPro" id="IPR004777">
    <property type="entry name" value="Lys/arg_exporter"/>
</dbReference>
<dbReference type="NCBIfam" id="TIGR00948">
    <property type="entry name" value="2a75"/>
    <property type="match status" value="1"/>
</dbReference>
<dbReference type="NCBIfam" id="NF006801">
    <property type="entry name" value="PRK09304.1"/>
    <property type="match status" value="1"/>
</dbReference>
<dbReference type="PANTHER" id="PTHR30086">
    <property type="entry name" value="ARGININE EXPORTER PROTEIN ARGO"/>
    <property type="match status" value="1"/>
</dbReference>
<dbReference type="PANTHER" id="PTHR30086:SF20">
    <property type="entry name" value="ARGININE EXPORTER PROTEIN ARGO-RELATED"/>
    <property type="match status" value="1"/>
</dbReference>
<dbReference type="Pfam" id="PF01810">
    <property type="entry name" value="LysE"/>
    <property type="match status" value="1"/>
</dbReference>
<evidence type="ECO:0000255" key="1">
    <source>
        <dbReference type="HAMAP-Rule" id="MF_01901"/>
    </source>
</evidence>
<comment type="function">
    <text evidence="1">Involved in the export of arginine. Important to control the intracellular level of arginine and the correct balance between arginine and lysine.</text>
</comment>
<comment type="catalytic activity">
    <reaction evidence="1">
        <text>L-arginine(in) = L-arginine(out)</text>
        <dbReference type="Rhea" id="RHEA:32143"/>
        <dbReference type="ChEBI" id="CHEBI:32682"/>
    </reaction>
    <physiologicalReaction direction="left-to-right" evidence="1">
        <dbReference type="Rhea" id="RHEA:32144"/>
    </physiologicalReaction>
</comment>
<comment type="subcellular location">
    <subcellularLocation>
        <location evidence="1">Cell inner membrane</location>
        <topology evidence="1">Multi-pass membrane protein</topology>
    </subcellularLocation>
</comment>
<comment type="similarity">
    <text evidence="1">Belongs to the LysE/ArgO transporter (TC 2.A.75) family.</text>
</comment>
<protein>
    <recommendedName>
        <fullName evidence="1">Arginine exporter protein ArgO</fullName>
    </recommendedName>
</protein>
<reference key="1">
    <citation type="submission" date="2006-09" db="EMBL/GenBank/DDBJ databases">
        <authorList>
            <consortium name="The Klebsiella pneumonia Genome Sequencing Project"/>
            <person name="McClelland M."/>
            <person name="Sanderson E.K."/>
            <person name="Spieth J."/>
            <person name="Clifton W.S."/>
            <person name="Latreille P."/>
            <person name="Sabo A."/>
            <person name="Pepin K."/>
            <person name="Bhonagiri V."/>
            <person name="Porwollik S."/>
            <person name="Ali J."/>
            <person name="Wilson R.K."/>
        </authorList>
    </citation>
    <scope>NUCLEOTIDE SEQUENCE [LARGE SCALE GENOMIC DNA]</scope>
    <source>
        <strain>ATCC 700721 / MGH 78578</strain>
    </source>
</reference>
<sequence length="211" mass="23209">MFTYYFQGLALGAAMILPLGPQNAFVMNQGIRRQYHLMIALLCAVSDLLLICAGIFGGSALLMQSPWLLALVTWGGVAFLLCYGFGALKTAFSQSLELANAEVMQQGRWKIIITMLAVTWLNPHVYLDTFVVLGSLGGQLAVEPKRWFALGTISASFLWFFGLALLAAWLAPRLRTARAQRIINIVVGAVMWFIAFQLAREGVSHIQALLN</sequence>
<name>ARGO_KLEP7</name>